<comment type="subunit">
    <text evidence="1">Homodimer.</text>
</comment>
<comment type="domain">
    <text evidence="1">Contains an N-terminal DNA-binding winged helix-turn-helix domain and a C-terminal regulatory domain (or effector binding domain) resembling phosphoribosyltransferase (PRT) domain (By similarity). However, the PRT domain lacks enzymatic activity and serves a purely regulatory role by binding effector molecules (By similarity).</text>
</comment>
<comment type="similarity">
    <text evidence="2">Belongs to the purine/pyrimidine phosphoribosyltransferase family. PurR subfamily.</text>
</comment>
<sequence>MKLRRSDRMVVISNYLINNPYKLTSLNTFAEKYESAKSSISEDIVIIKRAFEEIEIGHIQTVTGAGGGVIFTPSISSQDAKEMVEDLRTKLSESDRILPGGYIYLSDLLSTPAILKNIGRIIAKSFMDQKIDAVMTVATKGVPLANAVANVLNVSFVIVRRDLKITEGSTVSVNYVSGSSGDRIEKMFLSKRSLKAGSRVLIVDDFLKGGGTVNGMISLLREFDSELAGVAVFADNAQEEREKQFDYKSLLKVTNIDVKNQAIDVEVGNIFDEDK</sequence>
<name>PURR_STRPN</name>
<gene>
    <name type="primary">purR</name>
    <name type="ordered locus">SP_1979</name>
</gene>
<feature type="chain" id="PRO_0000139702" description="Probable purine biosynthesis transcriptional regulator PurR">
    <location>
        <begin position="1"/>
        <end position="275"/>
    </location>
</feature>
<feature type="region of interest" description="DNA binding domain" evidence="1">
    <location>
        <begin position="1"/>
        <end position="73"/>
    </location>
</feature>
<feature type="region of interest" description="Effector binding domain" evidence="1">
    <location>
        <begin position="74"/>
        <end position="275"/>
    </location>
</feature>
<protein>
    <recommendedName>
        <fullName evidence="2">Probable purine biosynthesis transcriptional regulator PurR</fullName>
    </recommendedName>
</protein>
<keyword id="KW-0238">DNA-binding</keyword>
<keyword id="KW-1185">Reference proteome</keyword>
<keyword id="KW-0804">Transcription</keyword>
<keyword id="KW-0805">Transcription regulation</keyword>
<accession>P65832</accession>
<accession>Q97NP1</accession>
<evidence type="ECO:0000250" key="1">
    <source>
        <dbReference type="UniProtKB" id="P37551"/>
    </source>
</evidence>
<evidence type="ECO:0000305" key="2"/>
<reference key="1">
    <citation type="journal article" date="2001" name="Science">
        <title>Complete genome sequence of a virulent isolate of Streptococcus pneumoniae.</title>
        <authorList>
            <person name="Tettelin H."/>
            <person name="Nelson K.E."/>
            <person name="Paulsen I.T."/>
            <person name="Eisen J.A."/>
            <person name="Read T.D."/>
            <person name="Peterson S.N."/>
            <person name="Heidelberg J.F."/>
            <person name="DeBoy R.T."/>
            <person name="Haft D.H."/>
            <person name="Dodson R.J."/>
            <person name="Durkin A.S."/>
            <person name="Gwinn M.L."/>
            <person name="Kolonay J.F."/>
            <person name="Nelson W.C."/>
            <person name="Peterson J.D."/>
            <person name="Umayam L.A."/>
            <person name="White O."/>
            <person name="Salzberg S.L."/>
            <person name="Lewis M.R."/>
            <person name="Radune D."/>
            <person name="Holtzapple E.K."/>
            <person name="Khouri H.M."/>
            <person name="Wolf A.M."/>
            <person name="Utterback T.R."/>
            <person name="Hansen C.L."/>
            <person name="McDonald L.A."/>
            <person name="Feldblyum T.V."/>
            <person name="Angiuoli S.V."/>
            <person name="Dickinson T."/>
            <person name="Hickey E.K."/>
            <person name="Holt I.E."/>
            <person name="Loftus B.J."/>
            <person name="Yang F."/>
            <person name="Smith H.O."/>
            <person name="Venter J.C."/>
            <person name="Dougherty B.A."/>
            <person name="Morrison D.A."/>
            <person name="Hollingshead S.K."/>
            <person name="Fraser C.M."/>
        </authorList>
    </citation>
    <scope>NUCLEOTIDE SEQUENCE [LARGE SCALE GENOMIC DNA]</scope>
    <source>
        <strain>ATCC BAA-334 / TIGR4</strain>
    </source>
</reference>
<dbReference type="EMBL" id="AE005672">
    <property type="protein sequence ID" value="AAK76046.1"/>
    <property type="molecule type" value="Genomic_DNA"/>
</dbReference>
<dbReference type="PIR" id="E95231">
    <property type="entry name" value="E95231"/>
</dbReference>
<dbReference type="RefSeq" id="WP_001809310.1">
    <property type="nucleotide sequence ID" value="NZ_CP155539.1"/>
</dbReference>
<dbReference type="SMR" id="P65832"/>
<dbReference type="PaxDb" id="170187-SP_1979"/>
<dbReference type="EnsemblBacteria" id="AAK76046">
    <property type="protein sequence ID" value="AAK76046"/>
    <property type="gene ID" value="SP_1979"/>
</dbReference>
<dbReference type="KEGG" id="spn:SP_1979"/>
<dbReference type="eggNOG" id="COG0503">
    <property type="taxonomic scope" value="Bacteria"/>
</dbReference>
<dbReference type="PhylomeDB" id="P65832"/>
<dbReference type="BioCyc" id="SPNE170187:G1FZB-2033-MONOMER"/>
<dbReference type="Proteomes" id="UP000000585">
    <property type="component" value="Chromosome"/>
</dbReference>
<dbReference type="GO" id="GO:0003677">
    <property type="term" value="F:DNA binding"/>
    <property type="evidence" value="ECO:0007669"/>
    <property type="project" value="UniProtKB-KW"/>
</dbReference>
<dbReference type="GO" id="GO:0045892">
    <property type="term" value="P:negative regulation of DNA-templated transcription"/>
    <property type="evidence" value="ECO:0007669"/>
    <property type="project" value="InterPro"/>
</dbReference>
<dbReference type="GO" id="GO:0045982">
    <property type="term" value="P:negative regulation of purine nucleobase metabolic process"/>
    <property type="evidence" value="ECO:0007669"/>
    <property type="project" value="InterPro"/>
</dbReference>
<dbReference type="CDD" id="cd06223">
    <property type="entry name" value="PRTases_typeI"/>
    <property type="match status" value="1"/>
</dbReference>
<dbReference type="Gene3D" id="3.40.50.2020">
    <property type="match status" value="1"/>
</dbReference>
<dbReference type="Gene3D" id="1.10.10.10">
    <property type="entry name" value="Winged helix-like DNA-binding domain superfamily/Winged helix DNA-binding domain"/>
    <property type="match status" value="1"/>
</dbReference>
<dbReference type="InterPro" id="IPR000836">
    <property type="entry name" value="PRibTrfase_dom"/>
</dbReference>
<dbReference type="InterPro" id="IPR029057">
    <property type="entry name" value="PRTase-like"/>
</dbReference>
<dbReference type="InterPro" id="IPR050118">
    <property type="entry name" value="Pur/Pyrimidine_PRTase"/>
</dbReference>
<dbReference type="InterPro" id="IPR015265">
    <property type="entry name" value="PuR_N"/>
</dbReference>
<dbReference type="InterPro" id="IPR010078">
    <property type="entry name" value="PurR_Bsub"/>
</dbReference>
<dbReference type="InterPro" id="IPR036388">
    <property type="entry name" value="WH-like_DNA-bd_sf"/>
</dbReference>
<dbReference type="InterPro" id="IPR036390">
    <property type="entry name" value="WH_DNA-bd_sf"/>
</dbReference>
<dbReference type="NCBIfam" id="TIGR01743">
    <property type="entry name" value="purR_Bsub"/>
    <property type="match status" value="1"/>
</dbReference>
<dbReference type="PANTHER" id="PTHR43864">
    <property type="entry name" value="HYPOXANTHINE/GUANINE PHOSPHORIBOSYLTRANSFERASE"/>
    <property type="match status" value="1"/>
</dbReference>
<dbReference type="PANTHER" id="PTHR43864:SF2">
    <property type="entry name" value="PUR OPERON REPRESSOR"/>
    <property type="match status" value="1"/>
</dbReference>
<dbReference type="Pfam" id="PF00156">
    <property type="entry name" value="Pribosyltran"/>
    <property type="match status" value="1"/>
</dbReference>
<dbReference type="Pfam" id="PF09182">
    <property type="entry name" value="PuR_N"/>
    <property type="match status" value="1"/>
</dbReference>
<dbReference type="SUPFAM" id="SSF53271">
    <property type="entry name" value="PRTase-like"/>
    <property type="match status" value="1"/>
</dbReference>
<dbReference type="SUPFAM" id="SSF46785">
    <property type="entry name" value="Winged helix' DNA-binding domain"/>
    <property type="match status" value="1"/>
</dbReference>
<proteinExistence type="inferred from homology"/>
<organism>
    <name type="scientific">Streptococcus pneumoniae serotype 4 (strain ATCC BAA-334 / TIGR4)</name>
    <dbReference type="NCBI Taxonomy" id="170187"/>
    <lineage>
        <taxon>Bacteria</taxon>
        <taxon>Bacillati</taxon>
        <taxon>Bacillota</taxon>
        <taxon>Bacilli</taxon>
        <taxon>Lactobacillales</taxon>
        <taxon>Streptococcaceae</taxon>
        <taxon>Streptococcus</taxon>
    </lineage>
</organism>